<dbReference type="EMBL" id="AB196633">
    <property type="protein sequence ID" value="BAE53435.1"/>
    <property type="molecule type" value="mRNA"/>
</dbReference>
<dbReference type="EMBL" id="AC090753">
    <property type="status" value="NOT_ANNOTATED_CDS"/>
    <property type="molecule type" value="Genomic_DNA"/>
</dbReference>
<dbReference type="EMBL" id="AC100871">
    <property type="status" value="NOT_ANNOTATED_CDS"/>
    <property type="molecule type" value="Genomic_DNA"/>
</dbReference>
<dbReference type="CCDS" id="CCDS43767.1"/>
<dbReference type="RefSeq" id="NP_001034201.2">
    <property type="nucleotide sequence ID" value="NM_001039112.2"/>
</dbReference>
<dbReference type="RefSeq" id="XP_011515534.1">
    <property type="nucleotide sequence ID" value="XM_011517232.4"/>
</dbReference>
<dbReference type="RefSeq" id="XP_011515535.1">
    <property type="nucleotide sequence ID" value="XM_011517233.4"/>
</dbReference>
<dbReference type="SMR" id="Q2WGJ9"/>
<dbReference type="BioGRID" id="576385">
    <property type="interactions" value="6"/>
</dbReference>
<dbReference type="IntAct" id="Q2WGJ9">
    <property type="interactions" value="1"/>
</dbReference>
<dbReference type="STRING" id="9606.ENSP00000428280"/>
<dbReference type="GlyConnect" id="2040">
    <property type="glycosylation" value="2 N-Linked glycans (1 site)"/>
</dbReference>
<dbReference type="GlyCosmos" id="Q2WGJ9">
    <property type="glycosylation" value="2 sites, 6 glycans"/>
</dbReference>
<dbReference type="GlyGen" id="Q2WGJ9">
    <property type="glycosylation" value="3 sites, 4 N-linked glycans (1 site), 2 O-linked glycans (2 sites)"/>
</dbReference>
<dbReference type="iPTMnet" id="Q2WGJ9"/>
<dbReference type="PhosphoSitePlus" id="Q2WGJ9"/>
<dbReference type="BioMuta" id="FER1L6"/>
<dbReference type="DMDM" id="262527544"/>
<dbReference type="jPOST" id="Q2WGJ9"/>
<dbReference type="MassIVE" id="Q2WGJ9"/>
<dbReference type="PaxDb" id="9606-ENSP00000428280"/>
<dbReference type="PeptideAtlas" id="Q2WGJ9"/>
<dbReference type="ProteomicsDB" id="61537"/>
<dbReference type="Antibodypedia" id="65278">
    <property type="antibodies" value="7 antibodies from 6 providers"/>
</dbReference>
<dbReference type="DNASU" id="654463"/>
<dbReference type="Ensembl" id="ENST00000522917.5">
    <property type="protein sequence ID" value="ENSP00000428280.1"/>
    <property type="gene ID" value="ENSG00000214814.7"/>
</dbReference>
<dbReference type="GeneID" id="654463"/>
<dbReference type="KEGG" id="hsa:654463"/>
<dbReference type="MANE-Select" id="ENST00000522917.5">
    <property type="protein sequence ID" value="ENSP00000428280.1"/>
    <property type="RefSeq nucleotide sequence ID" value="NM_001039112.2"/>
    <property type="RefSeq protein sequence ID" value="NP_001034201.2"/>
</dbReference>
<dbReference type="UCSC" id="uc003yqw.3">
    <property type="organism name" value="human"/>
</dbReference>
<dbReference type="AGR" id="HGNC:28065"/>
<dbReference type="CTD" id="654463"/>
<dbReference type="DisGeNET" id="654463"/>
<dbReference type="GeneCards" id="FER1L6"/>
<dbReference type="HGNC" id="HGNC:28065">
    <property type="gene designation" value="FER1L6"/>
</dbReference>
<dbReference type="HPA" id="ENSG00000214814">
    <property type="expression patterns" value="Tissue enriched (stomach)"/>
</dbReference>
<dbReference type="MIM" id="620884">
    <property type="type" value="gene"/>
</dbReference>
<dbReference type="neXtProt" id="NX_Q2WGJ9"/>
<dbReference type="OpenTargets" id="ENSG00000214814"/>
<dbReference type="PharmGKB" id="PA162388227"/>
<dbReference type="VEuPathDB" id="HostDB:ENSG00000214814"/>
<dbReference type="eggNOG" id="KOG1326">
    <property type="taxonomic scope" value="Eukaryota"/>
</dbReference>
<dbReference type="GeneTree" id="ENSGT00940000159069"/>
<dbReference type="HOGENOM" id="CLU_001183_3_1_1"/>
<dbReference type="InParanoid" id="Q2WGJ9"/>
<dbReference type="OMA" id="QFVNKWA"/>
<dbReference type="OrthoDB" id="10059618at2759"/>
<dbReference type="PAN-GO" id="Q2WGJ9">
    <property type="GO annotations" value="1 GO annotation based on evolutionary models"/>
</dbReference>
<dbReference type="PhylomeDB" id="Q2WGJ9"/>
<dbReference type="TreeFam" id="TF316871"/>
<dbReference type="PathwayCommons" id="Q2WGJ9"/>
<dbReference type="SignaLink" id="Q2WGJ9"/>
<dbReference type="BioGRID-ORCS" id="654463">
    <property type="hits" value="11 hits in 1148 CRISPR screens"/>
</dbReference>
<dbReference type="ChiTaRS" id="FER1L6">
    <property type="organism name" value="human"/>
</dbReference>
<dbReference type="GenomeRNAi" id="654463"/>
<dbReference type="Pharos" id="Q2WGJ9">
    <property type="development level" value="Tdark"/>
</dbReference>
<dbReference type="PRO" id="PR:Q2WGJ9"/>
<dbReference type="Proteomes" id="UP000005640">
    <property type="component" value="Chromosome 8"/>
</dbReference>
<dbReference type="RNAct" id="Q2WGJ9">
    <property type="molecule type" value="protein"/>
</dbReference>
<dbReference type="Bgee" id="ENSG00000214814">
    <property type="expression patterns" value="Expressed in rectum and 50 other cell types or tissues"/>
</dbReference>
<dbReference type="GO" id="GO:0016020">
    <property type="term" value="C:membrane"/>
    <property type="evidence" value="ECO:0007669"/>
    <property type="project" value="UniProtKB-SubCell"/>
</dbReference>
<dbReference type="GO" id="GO:0046872">
    <property type="term" value="F:metal ion binding"/>
    <property type="evidence" value="ECO:0007669"/>
    <property type="project" value="UniProtKB-KW"/>
</dbReference>
<dbReference type="GO" id="GO:0010628">
    <property type="term" value="P:positive regulation of gene expression"/>
    <property type="evidence" value="ECO:0000318"/>
    <property type="project" value="GO_Central"/>
</dbReference>
<dbReference type="GO" id="GO:0009617">
    <property type="term" value="P:response to bacterium"/>
    <property type="evidence" value="ECO:0007669"/>
    <property type="project" value="Ensembl"/>
</dbReference>
<dbReference type="CDD" id="cd04011">
    <property type="entry name" value="C2B_Ferlin"/>
    <property type="match status" value="1"/>
</dbReference>
<dbReference type="CDD" id="cd04018">
    <property type="entry name" value="C2C_Ferlin"/>
    <property type="match status" value="1"/>
</dbReference>
<dbReference type="CDD" id="cd04017">
    <property type="entry name" value="C2D_Ferlin"/>
    <property type="match status" value="1"/>
</dbReference>
<dbReference type="CDD" id="cd04037">
    <property type="entry name" value="C2E_Ferlin"/>
    <property type="match status" value="1"/>
</dbReference>
<dbReference type="CDD" id="cd08374">
    <property type="entry name" value="C2F_Ferlin"/>
    <property type="match status" value="1"/>
</dbReference>
<dbReference type="FunFam" id="2.60.40.150:FF:000009">
    <property type="entry name" value="dysferlin isoform X2"/>
    <property type="match status" value="1"/>
</dbReference>
<dbReference type="FunFam" id="2.60.40.150:FF:000026">
    <property type="entry name" value="dysferlin isoform X2"/>
    <property type="match status" value="1"/>
</dbReference>
<dbReference type="FunFam" id="2.60.40.150:FF:000138">
    <property type="entry name" value="Fer-1-like family member 6"/>
    <property type="match status" value="1"/>
</dbReference>
<dbReference type="FunFam" id="2.60.40.150:FF:000034">
    <property type="entry name" value="otoferlin isoform X2"/>
    <property type="match status" value="1"/>
</dbReference>
<dbReference type="FunFam" id="2.60.40.150:FF:000054">
    <property type="entry name" value="otoferlin isoform X2"/>
    <property type="match status" value="1"/>
</dbReference>
<dbReference type="Gene3D" id="2.60.40.150">
    <property type="entry name" value="C2 domain"/>
    <property type="match status" value="5"/>
</dbReference>
<dbReference type="InterPro" id="IPR000008">
    <property type="entry name" value="C2_dom"/>
</dbReference>
<dbReference type="InterPro" id="IPR035892">
    <property type="entry name" value="C2_domain_sf"/>
</dbReference>
<dbReference type="InterPro" id="IPR037720">
    <property type="entry name" value="C2B_Ferlin"/>
</dbReference>
<dbReference type="InterPro" id="IPR037722">
    <property type="entry name" value="C2C_Ferlin"/>
</dbReference>
<dbReference type="InterPro" id="IPR037723">
    <property type="entry name" value="C2D_Ferlin"/>
</dbReference>
<dbReference type="InterPro" id="IPR037724">
    <property type="entry name" value="C2E_Ferlin"/>
</dbReference>
<dbReference type="InterPro" id="IPR037725">
    <property type="entry name" value="C2F_Ferlin"/>
</dbReference>
<dbReference type="InterPro" id="IPR012968">
    <property type="entry name" value="FerIin_dom"/>
</dbReference>
<dbReference type="InterPro" id="IPR037721">
    <property type="entry name" value="Ferlin"/>
</dbReference>
<dbReference type="InterPro" id="IPR012561">
    <property type="entry name" value="Ferlin_B-domain"/>
</dbReference>
<dbReference type="InterPro" id="IPR032362">
    <property type="entry name" value="Ferlin_C"/>
</dbReference>
<dbReference type="InterPro" id="IPR055072">
    <property type="entry name" value="Ferlin_DSRM"/>
</dbReference>
<dbReference type="PANTHER" id="PTHR12546">
    <property type="entry name" value="FER-1-LIKE"/>
    <property type="match status" value="1"/>
</dbReference>
<dbReference type="PANTHER" id="PTHR12546:SF37">
    <property type="entry name" value="FER-1-LIKE 6 (C. ELEGANS)"/>
    <property type="match status" value="1"/>
</dbReference>
<dbReference type="Pfam" id="PF00168">
    <property type="entry name" value="C2"/>
    <property type="match status" value="6"/>
</dbReference>
<dbReference type="Pfam" id="PF22901">
    <property type="entry name" value="dsrm_Ferlin"/>
    <property type="match status" value="1"/>
</dbReference>
<dbReference type="Pfam" id="PF08150">
    <property type="entry name" value="FerB"/>
    <property type="match status" value="1"/>
</dbReference>
<dbReference type="Pfam" id="PF08151">
    <property type="entry name" value="FerI"/>
    <property type="match status" value="1"/>
</dbReference>
<dbReference type="Pfam" id="PF16165">
    <property type="entry name" value="Ferlin_C"/>
    <property type="match status" value="1"/>
</dbReference>
<dbReference type="SMART" id="SM00239">
    <property type="entry name" value="C2"/>
    <property type="match status" value="5"/>
</dbReference>
<dbReference type="SMART" id="SM01201">
    <property type="entry name" value="FerB"/>
    <property type="match status" value="1"/>
</dbReference>
<dbReference type="SMART" id="SM01202">
    <property type="entry name" value="FerI"/>
    <property type="match status" value="1"/>
</dbReference>
<dbReference type="SUPFAM" id="SSF49562">
    <property type="entry name" value="C2 domain (Calcium/lipid-binding domain, CaLB)"/>
    <property type="match status" value="6"/>
</dbReference>
<dbReference type="PROSITE" id="PS50004">
    <property type="entry name" value="C2"/>
    <property type="match status" value="6"/>
</dbReference>
<name>FR1L6_HUMAN</name>
<sequence>MFGLKVKKKRNKAEKGLILANKAAKDSQGDTEALQEEPSHQEGPRGDLVHDDASIFPVPSASPKRRSKLLTKIHDGEVRSQNYQIAITITEARQLVGENIDPVVTIEIGDEKKQSTVKEGTNSPFYNEYFVFDFIGPQVHLFDKIIKISVFHHKLIGSVLIGSFKVDLGTVYNQPGHQFCNKWALLTDPGDIRTGTKGYLKCDISVMGKGDVLKTSPKTSDTEEPIEKNLLIPNGFPLERPWARFYVRLYKAEGLPKMNSSIMANVTKAFVGDSKDLVDPFVEVSFAGQMGRTTVQKNCADPVWHEQVIFKEMFPPLCRRVKIQVWDEGSMNDVALATHFIDLKKISNEQDGDKGFLPTFGPAWINLYGSPRNHSLMDDYQEMNEGFGEGVSFRGRILVEIAVEILSGRAQESKFSKALKELKLPSKDKDSKSSKGKDKADKTEDGKSQQASNKTNSTEVEVESFDVPPEIVPEKNEEFLLFGAFFEATMIDRKIGDKPISFEVSIGNFGNLIDGGSHHGSKKSAESAEEDLLPLLHEGQGDVAHDVPIPMASTTHPEKPLVTEGNRNYNYLPFEAKKPCVYFISSWGDQTFRLHWSNMLEKMADFLEESIEEVRELIKISQEAPEEKMKTVLSDFISRSSAFISEAEKKPKMLNQTTLDKKRLTLCWQELEAMCKEAKGIIQQQKKKLSVDEMIHEAQNFVEKIRFLVDEPQHTIPDVFIWMLSNNRRVAYARIASKDLLYSPVAGQMGKHCGKIKTHFLKPPGKRPAGWSVQAKVDVYLWLGSIKHASAILDNLPVGYEAEMSSKGAGTNHPPSNLLYQEQHVFQLRAHMYQARGLIAADSNGLSDPFAKVTFLSHCQTTKIISQTLSPTWNQMLLFNDLVLHGDVKELAESPPLVVVELYDSDAVGKPEYLGATVAAPVVKLADQDYEPPRLCYHPIFCGNLSGGDLLAVFELLQVPPSGLQGLPPVEPPDITQIYPVPANIRPVLSKYRVEVLFWGVREMKKVQLLSVDRPQALIECGGQGVKSCVIQSYKNNPNFSIQADAFEVELPENELLHPPLSICVVDWRAFGRSTLVGTYTINYLKQFLCKLREPLAPITQVDGTQPGHDISDSLTATESSGAHSSSQDPPADHIYVDVEPPPTVVPDSAQAQPAILVDVPDSSPMLEPEHTPVAQEPPKDGKPKDPRKPSRRSTKRRKRTIADESAENVIDWWSKYYASLKKAQKAKERNPKGKKGNTEAKPDEVVVDIEDGPKKKKDKMLKKKPKDDGIPNLAILQIYDGDLESEFNNFEDWVKTFELFRGKSTEDDHGLDGDRVIGKFKGSFCIYKSPQDSSSEDSGQLRIQQGIPPNHPVTVLIRVYIVAAFNLSPADPDGKSDPYIVIKLGKTEIKDRDKYIPKQLNPVFGRSFEIQATFPKESLLSILIYDHDMIGTDDLIGETKIDLENRFYSKHRAICGLQSQYEIEGYNAWRDTSKPTEILTKLCKDNKLDGPYFHPGKIQIGNQVFSGKTIFTEEDTDETVESYEHLALKVLHSWEDIPEVGCRLVPEHIETRPLYHKDKPGMEQGRLQMWVDMFPKDMPQPGPPVDISPRRPKGYELRVTIWNTEDVILEDENIFTGQKSSDIYVKGWLKGLEDDKQETDVHYNSLTGEGNFNWRFLFPFQYLPAEKQMVITKRENIFSLEKMECKTPAVLVLQVWDFERLSSDDFLGTLEMNLNSFPRAAKSAKACDLAKFENASEETKISIFQQKRVRGWWPFSKSKELTGKVEAEFHLVTAEEAEKNPVGKARKEPEPLAKPNRPDTSFSWFMSPFKCLYYLIWKNYKKYIIIAFILIILIIFLVLFIYTLPGAISRRIVVGS</sequence>
<reference key="1">
    <citation type="submission" date="2004-12" db="EMBL/GenBank/DDBJ databases">
        <title>Novel gene on human chromosome 8.</title>
        <authorList>
            <person name="Shimizu N."/>
            <person name="Asakawa S."/>
            <person name="Shimizu A."/>
            <person name="Yamazaki S."/>
            <person name="Ishikawa S.K."/>
        </authorList>
    </citation>
    <scope>NUCLEOTIDE SEQUENCE [MRNA]</scope>
    <source>
        <tissue>Kidney</tissue>
    </source>
</reference>
<reference key="2">
    <citation type="journal article" date="2006" name="Nature">
        <title>DNA sequence and analysis of human chromosome 8.</title>
        <authorList>
            <person name="Nusbaum C."/>
            <person name="Mikkelsen T.S."/>
            <person name="Zody M.C."/>
            <person name="Asakawa S."/>
            <person name="Taudien S."/>
            <person name="Garber M."/>
            <person name="Kodira C.D."/>
            <person name="Schueler M.G."/>
            <person name="Shimizu A."/>
            <person name="Whittaker C.A."/>
            <person name="Chang J.L."/>
            <person name="Cuomo C.A."/>
            <person name="Dewar K."/>
            <person name="FitzGerald M.G."/>
            <person name="Yang X."/>
            <person name="Allen N.R."/>
            <person name="Anderson S."/>
            <person name="Asakawa T."/>
            <person name="Blechschmidt K."/>
            <person name="Bloom T."/>
            <person name="Borowsky M.L."/>
            <person name="Butler J."/>
            <person name="Cook A."/>
            <person name="Corum B."/>
            <person name="DeArellano K."/>
            <person name="DeCaprio D."/>
            <person name="Dooley K.T."/>
            <person name="Dorris L. III"/>
            <person name="Engels R."/>
            <person name="Gloeckner G."/>
            <person name="Hafez N."/>
            <person name="Hagopian D.S."/>
            <person name="Hall J.L."/>
            <person name="Ishikawa S.K."/>
            <person name="Jaffe D.B."/>
            <person name="Kamat A."/>
            <person name="Kudoh J."/>
            <person name="Lehmann R."/>
            <person name="Lokitsang T."/>
            <person name="Macdonald P."/>
            <person name="Major J.E."/>
            <person name="Matthews C.D."/>
            <person name="Mauceli E."/>
            <person name="Menzel U."/>
            <person name="Mihalev A.H."/>
            <person name="Minoshima S."/>
            <person name="Murayama Y."/>
            <person name="Naylor J.W."/>
            <person name="Nicol R."/>
            <person name="Nguyen C."/>
            <person name="O'Leary S.B."/>
            <person name="O'Neill K."/>
            <person name="Parker S.C.J."/>
            <person name="Polley A."/>
            <person name="Raymond C.K."/>
            <person name="Reichwald K."/>
            <person name="Rodriguez J."/>
            <person name="Sasaki T."/>
            <person name="Schilhabel M."/>
            <person name="Siddiqui R."/>
            <person name="Smith C.L."/>
            <person name="Sneddon T.P."/>
            <person name="Talamas J.A."/>
            <person name="Tenzin P."/>
            <person name="Topham K."/>
            <person name="Venkataraman V."/>
            <person name="Wen G."/>
            <person name="Yamazaki S."/>
            <person name="Young S.K."/>
            <person name="Zeng Q."/>
            <person name="Zimmer A.R."/>
            <person name="Rosenthal A."/>
            <person name="Birren B.W."/>
            <person name="Platzer M."/>
            <person name="Shimizu N."/>
            <person name="Lander E.S."/>
        </authorList>
    </citation>
    <scope>NUCLEOTIDE SEQUENCE [LARGE SCALE GENOMIC DNA]</scope>
</reference>
<feature type="chain" id="PRO_0000323674" description="Fer-1-like protein 6">
    <location>
        <begin position="1"/>
        <end position="1857"/>
    </location>
</feature>
<feature type="topological domain" description="Cytoplasmic" evidence="1">
    <location>
        <begin position="1"/>
        <end position="1824"/>
    </location>
</feature>
<feature type="transmembrane region" description="Helical" evidence="1">
    <location>
        <begin position="1825"/>
        <end position="1845"/>
    </location>
</feature>
<feature type="topological domain" description="Extracellular" evidence="1">
    <location>
        <begin position="1846"/>
        <end position="1857"/>
    </location>
</feature>
<feature type="domain" description="C2 1" evidence="2">
    <location>
        <begin position="65"/>
        <end position="181"/>
    </location>
</feature>
<feature type="domain" description="C2 2" evidence="2">
    <location>
        <begin position="225"/>
        <end position="356"/>
    </location>
</feature>
<feature type="domain" description="C2 3" evidence="2">
    <location>
        <begin position="810"/>
        <end position="937"/>
    </location>
</feature>
<feature type="domain" description="C2 4" evidence="2">
    <location>
        <begin position="969"/>
        <end position="1099"/>
    </location>
</feature>
<feature type="domain" description="C2 5" evidence="2">
    <location>
        <begin position="1338"/>
        <end position="1457"/>
    </location>
</feature>
<feature type="domain" description="C2 6" evidence="2">
    <location>
        <begin position="1578"/>
        <end position="1729"/>
    </location>
</feature>
<feature type="region of interest" description="Disordered" evidence="3">
    <location>
        <begin position="15"/>
        <end position="63"/>
    </location>
</feature>
<feature type="region of interest" description="Disordered" evidence="3">
    <location>
        <begin position="426"/>
        <end position="469"/>
    </location>
</feature>
<feature type="region of interest" description="Disordered" evidence="3">
    <location>
        <begin position="1101"/>
        <end position="1148"/>
    </location>
</feature>
<feature type="region of interest" description="Disordered" evidence="3">
    <location>
        <begin position="1161"/>
        <end position="1203"/>
    </location>
</feature>
<feature type="region of interest" description="Disordered" evidence="3">
    <location>
        <begin position="1224"/>
        <end position="1246"/>
    </location>
</feature>
<feature type="compositionally biased region" description="Basic and acidic residues" evidence="3">
    <location>
        <begin position="37"/>
        <end position="53"/>
    </location>
</feature>
<feature type="compositionally biased region" description="Basic and acidic residues" evidence="3">
    <location>
        <begin position="426"/>
        <end position="447"/>
    </location>
</feature>
<feature type="compositionally biased region" description="Polar residues" evidence="3">
    <location>
        <begin position="448"/>
        <end position="459"/>
    </location>
</feature>
<feature type="compositionally biased region" description="Polar residues" evidence="3">
    <location>
        <begin position="1113"/>
        <end position="1129"/>
    </location>
</feature>
<feature type="compositionally biased region" description="Basic and acidic residues" evidence="3">
    <location>
        <begin position="1178"/>
        <end position="1189"/>
    </location>
</feature>
<feature type="compositionally biased region" description="Basic residues" evidence="3">
    <location>
        <begin position="1190"/>
        <end position="1200"/>
    </location>
</feature>
<feature type="compositionally biased region" description="Basic and acidic residues" evidence="3">
    <location>
        <begin position="1226"/>
        <end position="1245"/>
    </location>
</feature>
<feature type="binding site" evidence="2">
    <location>
        <position position="842"/>
    </location>
    <ligand>
        <name>Ca(2+)</name>
        <dbReference type="ChEBI" id="CHEBI:29108"/>
        <label>1</label>
    </ligand>
</feature>
<feature type="binding site" evidence="2">
    <location>
        <position position="848"/>
    </location>
    <ligand>
        <name>Ca(2+)</name>
        <dbReference type="ChEBI" id="CHEBI:29108"/>
        <label>1</label>
    </ligand>
</feature>
<feature type="binding site" evidence="2">
    <location>
        <position position="904"/>
    </location>
    <ligand>
        <name>Ca(2+)</name>
        <dbReference type="ChEBI" id="CHEBI:29108"/>
        <label>1</label>
    </ligand>
</feature>
<feature type="binding site" evidence="2">
    <location>
        <position position="906"/>
    </location>
    <ligand>
        <name>Ca(2+)</name>
        <dbReference type="ChEBI" id="CHEBI:29108"/>
        <label>1</label>
    </ligand>
</feature>
<feature type="binding site" evidence="2">
    <location>
        <position position="1372"/>
    </location>
    <ligand>
        <name>Ca(2+)</name>
        <dbReference type="ChEBI" id="CHEBI:29108"/>
        <label>2</label>
    </ligand>
</feature>
<feature type="binding site" evidence="2">
    <location>
        <position position="1372"/>
    </location>
    <ligand>
        <name>Ca(2+)</name>
        <dbReference type="ChEBI" id="CHEBI:29108"/>
        <label>3</label>
    </ligand>
</feature>
<feature type="binding site" evidence="2">
    <location>
        <position position="1378"/>
    </location>
    <ligand>
        <name>Ca(2+)</name>
        <dbReference type="ChEBI" id="CHEBI:29108"/>
        <label>2</label>
    </ligand>
</feature>
<feature type="binding site" evidence="2">
    <location>
        <position position="1427"/>
    </location>
    <ligand>
        <name>Ca(2+)</name>
        <dbReference type="ChEBI" id="CHEBI:29108"/>
        <label>2</label>
    </ligand>
</feature>
<feature type="binding site" evidence="2">
    <location>
        <position position="1427"/>
    </location>
    <ligand>
        <name>Ca(2+)</name>
        <dbReference type="ChEBI" id="CHEBI:29108"/>
        <label>3</label>
    </ligand>
</feature>
<feature type="binding site" evidence="2">
    <location>
        <position position="1429"/>
    </location>
    <ligand>
        <name>Ca(2+)</name>
        <dbReference type="ChEBI" id="CHEBI:29108"/>
        <label>2</label>
    </ligand>
</feature>
<feature type="binding site" evidence="2">
    <location>
        <position position="1429"/>
    </location>
    <ligand>
        <name>Ca(2+)</name>
        <dbReference type="ChEBI" id="CHEBI:29108"/>
        <label>3</label>
    </ligand>
</feature>
<feature type="binding site" evidence="2">
    <location>
        <position position="1435"/>
    </location>
    <ligand>
        <name>Ca(2+)</name>
        <dbReference type="ChEBI" id="CHEBI:29108"/>
        <label>3</label>
    </ligand>
</feature>
<feature type="sequence variant" id="VAR_039558" description="In dbSNP:rs7012186.">
    <original>D</original>
    <variation>E</variation>
    <location>
        <position position="1110"/>
    </location>
</feature>
<feature type="sequence conflict" description="In Ref. 1; BAE53435." evidence="4" ref="1">
    <original>H</original>
    <variation>Y</variation>
    <location>
        <position position="519"/>
    </location>
</feature>
<organism>
    <name type="scientific">Homo sapiens</name>
    <name type="common">Human</name>
    <dbReference type="NCBI Taxonomy" id="9606"/>
    <lineage>
        <taxon>Eukaryota</taxon>
        <taxon>Metazoa</taxon>
        <taxon>Chordata</taxon>
        <taxon>Craniata</taxon>
        <taxon>Vertebrata</taxon>
        <taxon>Euteleostomi</taxon>
        <taxon>Mammalia</taxon>
        <taxon>Eutheria</taxon>
        <taxon>Euarchontoglires</taxon>
        <taxon>Primates</taxon>
        <taxon>Haplorrhini</taxon>
        <taxon>Catarrhini</taxon>
        <taxon>Hominidae</taxon>
        <taxon>Homo</taxon>
    </lineage>
</organism>
<keyword id="KW-0106">Calcium</keyword>
<keyword id="KW-0472">Membrane</keyword>
<keyword id="KW-0479">Metal-binding</keyword>
<keyword id="KW-1267">Proteomics identification</keyword>
<keyword id="KW-1185">Reference proteome</keyword>
<keyword id="KW-0677">Repeat</keyword>
<keyword id="KW-0812">Transmembrane</keyword>
<keyword id="KW-1133">Transmembrane helix</keyword>
<gene>
    <name type="primary">FER1L6</name>
    <name type="synonym">C8orfK23</name>
</gene>
<proteinExistence type="evidence at protein level"/>
<comment type="cofactor">
    <cofactor evidence="2">
        <name>Ca(2+)</name>
        <dbReference type="ChEBI" id="CHEBI:29108"/>
    </cofactor>
</comment>
<comment type="subcellular location">
    <subcellularLocation>
        <location evidence="4">Membrane</location>
        <topology evidence="4">Single-pass membrane protein</topology>
    </subcellularLocation>
</comment>
<comment type="similarity">
    <text evidence="4">Belongs to the ferlin family.</text>
</comment>
<accession>Q2WGJ9</accession>
<evidence type="ECO:0000255" key="1"/>
<evidence type="ECO:0000255" key="2">
    <source>
        <dbReference type="PROSITE-ProRule" id="PRU00041"/>
    </source>
</evidence>
<evidence type="ECO:0000256" key="3">
    <source>
        <dbReference type="SAM" id="MobiDB-lite"/>
    </source>
</evidence>
<evidence type="ECO:0000305" key="4"/>
<protein>
    <recommendedName>
        <fullName>Fer-1-like protein 6</fullName>
    </recommendedName>
</protein>